<accession>Q9STF7</accession>
<feature type="signal peptide" evidence="3">
    <location>
        <begin position="1"/>
        <end position="24"/>
    </location>
</feature>
<feature type="propeptide" id="PRO_0000435236" description="Activation peptide" evidence="1">
    <location>
        <begin position="25"/>
        <end position="111"/>
    </location>
</feature>
<feature type="chain" id="PRO_5004337274" description="Subtilisin-like protease SBT4.6" evidence="3">
    <location>
        <begin position="112"/>
        <end status="unknown"/>
    </location>
</feature>
<feature type="propeptide" id="PRO_0000435237" evidence="1">
    <location>
        <begin status="unknown"/>
        <end position="736"/>
    </location>
</feature>
<feature type="domain" description="Inhibitor I9" evidence="3">
    <location>
        <begin position="33"/>
        <end position="110"/>
    </location>
</feature>
<feature type="domain" description="Peptidase S8" evidence="5">
    <location>
        <begin position="115"/>
        <end position="589"/>
    </location>
</feature>
<feature type="domain" description="PA" evidence="3">
    <location>
        <begin position="362"/>
        <end position="442"/>
    </location>
</feature>
<feature type="active site" description="Charge relay system" evidence="5">
    <location>
        <position position="143"/>
    </location>
</feature>
<feature type="active site" description="Charge relay system" evidence="5">
    <location>
        <position position="204"/>
    </location>
</feature>
<feature type="active site" description="Charge relay system" evidence="5">
    <location>
        <position position="527"/>
    </location>
</feature>
<feature type="glycosylation site" description="N-linked (GlcNAc...) asparagine" evidence="4">
    <location>
        <position position="174"/>
    </location>
</feature>
<feature type="glycosylation site" description="N-linked (GlcNAc...) asparagine" evidence="4">
    <location>
        <position position="227"/>
    </location>
</feature>
<feature type="glycosylation site" description="N-linked (GlcNAc...) asparagine" evidence="4">
    <location>
        <position position="450"/>
    </location>
</feature>
<feature type="glycosylation site" description="N-linked (GlcNAc...) asparagine" evidence="4">
    <location>
        <position position="564"/>
    </location>
</feature>
<feature type="glycosylation site" description="N-linked (GlcNAc...) asparagine" evidence="4">
    <location>
        <position position="598"/>
    </location>
</feature>
<feature type="glycosylation site" description="N-linked (GlcNAc...) asparagine" evidence="4">
    <location>
        <position position="610"/>
    </location>
</feature>
<feature type="glycosylation site" description="N-linked (GlcNAc...) asparagine" evidence="4">
    <location>
        <position position="668"/>
    </location>
</feature>
<organism>
    <name type="scientific">Arabidopsis thaliana</name>
    <name type="common">Mouse-ear cress</name>
    <dbReference type="NCBI Taxonomy" id="3702"/>
    <lineage>
        <taxon>Eukaryota</taxon>
        <taxon>Viridiplantae</taxon>
        <taxon>Streptophyta</taxon>
        <taxon>Embryophyta</taxon>
        <taxon>Tracheophyta</taxon>
        <taxon>Spermatophyta</taxon>
        <taxon>Magnoliopsida</taxon>
        <taxon>eudicotyledons</taxon>
        <taxon>Gunneridae</taxon>
        <taxon>Pentapetalae</taxon>
        <taxon>rosids</taxon>
        <taxon>malvids</taxon>
        <taxon>Brassicales</taxon>
        <taxon>Brassicaceae</taxon>
        <taxon>Camelineae</taxon>
        <taxon>Arabidopsis</taxon>
    </lineage>
</organism>
<evidence type="ECO:0000250" key="1">
    <source>
        <dbReference type="UniProtKB" id="Q39547"/>
    </source>
</evidence>
<evidence type="ECO:0000250" key="2">
    <source>
        <dbReference type="UniProtKB" id="Q84WS0"/>
    </source>
</evidence>
<evidence type="ECO:0000255" key="3"/>
<evidence type="ECO:0000255" key="4">
    <source>
        <dbReference type="PROSITE-ProRule" id="PRU00498"/>
    </source>
</evidence>
<evidence type="ECO:0000255" key="5">
    <source>
        <dbReference type="PROSITE-ProRule" id="PRU01240"/>
    </source>
</evidence>
<evidence type="ECO:0000255" key="6">
    <source>
        <dbReference type="PROSITE-ProRule" id="PRU10082"/>
    </source>
</evidence>
<evidence type="ECO:0000303" key="7">
    <source>
    </source>
</evidence>
<evidence type="ECO:0000305" key="8"/>
<evidence type="ECO:0000312" key="9">
    <source>
        <dbReference type="Araport" id="AT3G46850"/>
    </source>
</evidence>
<evidence type="ECO:0000312" key="10">
    <source>
        <dbReference type="EMBL" id="CAB51180.1"/>
    </source>
</evidence>
<dbReference type="EC" id="3.4.21.-" evidence="6"/>
<dbReference type="EMBL" id="AL096859">
    <property type="protein sequence ID" value="CAB51180.1"/>
    <property type="molecule type" value="Genomic_DNA"/>
</dbReference>
<dbReference type="EMBL" id="CP002686">
    <property type="protein sequence ID" value="AEE78211.1"/>
    <property type="molecule type" value="Genomic_DNA"/>
</dbReference>
<dbReference type="PIR" id="T12963">
    <property type="entry name" value="T12963"/>
</dbReference>
<dbReference type="RefSeq" id="NP_566888.2">
    <property type="nucleotide sequence ID" value="NM_114552.3"/>
</dbReference>
<dbReference type="SMR" id="Q9STF7"/>
<dbReference type="FunCoup" id="Q9STF7">
    <property type="interactions" value="4"/>
</dbReference>
<dbReference type="STRING" id="3702.Q9STF7"/>
<dbReference type="MEROPS" id="S08.A06"/>
<dbReference type="GlyCosmos" id="Q9STF7">
    <property type="glycosylation" value="7 sites, No reported glycans"/>
</dbReference>
<dbReference type="GlyGen" id="Q9STF7">
    <property type="glycosylation" value="7 sites"/>
</dbReference>
<dbReference type="iPTMnet" id="Q9STF7"/>
<dbReference type="PaxDb" id="3702-AT3G46850.1"/>
<dbReference type="ProteomicsDB" id="226670"/>
<dbReference type="EnsemblPlants" id="AT3G46850.1">
    <property type="protein sequence ID" value="AT3G46850.1"/>
    <property type="gene ID" value="AT3G46850"/>
</dbReference>
<dbReference type="GeneID" id="823838"/>
<dbReference type="Gramene" id="AT3G46850.1">
    <property type="protein sequence ID" value="AT3G46850.1"/>
    <property type="gene ID" value="AT3G46850"/>
</dbReference>
<dbReference type="KEGG" id="ath:AT3G46850"/>
<dbReference type="Araport" id="AT3G46850"/>
<dbReference type="TAIR" id="AT3G46850"/>
<dbReference type="eggNOG" id="ENOG502QRA7">
    <property type="taxonomic scope" value="Eukaryota"/>
</dbReference>
<dbReference type="HOGENOM" id="CLU_000625_4_3_1"/>
<dbReference type="InParanoid" id="Q9STF7"/>
<dbReference type="OMA" id="ESRTCTK"/>
<dbReference type="PhylomeDB" id="Q9STF7"/>
<dbReference type="PRO" id="PR:Q9STF7"/>
<dbReference type="Proteomes" id="UP000006548">
    <property type="component" value="Chromosome 3"/>
</dbReference>
<dbReference type="ExpressionAtlas" id="Q9STF7">
    <property type="expression patterns" value="baseline and differential"/>
</dbReference>
<dbReference type="GO" id="GO:0005576">
    <property type="term" value="C:extracellular region"/>
    <property type="evidence" value="ECO:0007669"/>
    <property type="project" value="UniProtKB-SubCell"/>
</dbReference>
<dbReference type="GO" id="GO:0004252">
    <property type="term" value="F:serine-type endopeptidase activity"/>
    <property type="evidence" value="ECO:0007669"/>
    <property type="project" value="InterPro"/>
</dbReference>
<dbReference type="GO" id="GO:0006508">
    <property type="term" value="P:proteolysis"/>
    <property type="evidence" value="ECO:0007669"/>
    <property type="project" value="UniProtKB-KW"/>
</dbReference>
<dbReference type="CDD" id="cd02120">
    <property type="entry name" value="PA_subtilisin_like"/>
    <property type="match status" value="1"/>
</dbReference>
<dbReference type="CDD" id="cd04852">
    <property type="entry name" value="Peptidases_S8_3"/>
    <property type="match status" value="1"/>
</dbReference>
<dbReference type="FunFam" id="3.40.50.200:FF:000006">
    <property type="entry name" value="Subtilisin-like protease SBT1.5"/>
    <property type="match status" value="1"/>
</dbReference>
<dbReference type="FunFam" id="3.50.30.30:FF:000005">
    <property type="entry name" value="subtilisin-like protease SBT1.5"/>
    <property type="match status" value="1"/>
</dbReference>
<dbReference type="FunFam" id="3.30.70.80:FF:000002">
    <property type="entry name" value="Subtilisin-like protease SBT5.3"/>
    <property type="match status" value="1"/>
</dbReference>
<dbReference type="Gene3D" id="2.60.40.2310">
    <property type="match status" value="1"/>
</dbReference>
<dbReference type="Gene3D" id="3.50.30.30">
    <property type="match status" value="1"/>
</dbReference>
<dbReference type="Gene3D" id="3.30.70.80">
    <property type="entry name" value="Peptidase S8 propeptide/proteinase inhibitor I9"/>
    <property type="match status" value="1"/>
</dbReference>
<dbReference type="Gene3D" id="3.40.50.200">
    <property type="entry name" value="Peptidase S8/S53 domain"/>
    <property type="match status" value="1"/>
</dbReference>
<dbReference type="InterPro" id="IPR003137">
    <property type="entry name" value="PA_domain"/>
</dbReference>
<dbReference type="InterPro" id="IPR000209">
    <property type="entry name" value="Peptidase_S8/S53_dom"/>
</dbReference>
<dbReference type="InterPro" id="IPR036852">
    <property type="entry name" value="Peptidase_S8/S53_dom_sf"/>
</dbReference>
<dbReference type="InterPro" id="IPR023828">
    <property type="entry name" value="Peptidase_S8_Ser-AS"/>
</dbReference>
<dbReference type="InterPro" id="IPR015500">
    <property type="entry name" value="Peptidase_S8_subtilisin-rel"/>
</dbReference>
<dbReference type="InterPro" id="IPR034197">
    <property type="entry name" value="Peptidases_S8_3"/>
</dbReference>
<dbReference type="InterPro" id="IPR010259">
    <property type="entry name" value="S8pro/Inhibitor_I9"/>
</dbReference>
<dbReference type="InterPro" id="IPR037045">
    <property type="entry name" value="S8pro/Inhibitor_I9_sf"/>
</dbReference>
<dbReference type="InterPro" id="IPR045051">
    <property type="entry name" value="SBT"/>
</dbReference>
<dbReference type="InterPro" id="IPR041469">
    <property type="entry name" value="Subtilisin-like_FN3"/>
</dbReference>
<dbReference type="PANTHER" id="PTHR10795">
    <property type="entry name" value="PROPROTEIN CONVERTASE SUBTILISIN/KEXIN"/>
    <property type="match status" value="1"/>
</dbReference>
<dbReference type="Pfam" id="PF17766">
    <property type="entry name" value="fn3_6"/>
    <property type="match status" value="1"/>
</dbReference>
<dbReference type="Pfam" id="PF05922">
    <property type="entry name" value="Inhibitor_I9"/>
    <property type="match status" value="1"/>
</dbReference>
<dbReference type="Pfam" id="PF02225">
    <property type="entry name" value="PA"/>
    <property type="match status" value="1"/>
</dbReference>
<dbReference type="Pfam" id="PF00082">
    <property type="entry name" value="Peptidase_S8"/>
    <property type="match status" value="1"/>
</dbReference>
<dbReference type="PRINTS" id="PR00723">
    <property type="entry name" value="SUBTILISIN"/>
</dbReference>
<dbReference type="SUPFAM" id="SSF52743">
    <property type="entry name" value="Subtilisin-like"/>
    <property type="match status" value="1"/>
</dbReference>
<dbReference type="PROSITE" id="PS51892">
    <property type="entry name" value="SUBTILASE"/>
    <property type="match status" value="1"/>
</dbReference>
<dbReference type="PROSITE" id="PS00138">
    <property type="entry name" value="SUBTILASE_SER"/>
    <property type="match status" value="1"/>
</dbReference>
<comment type="subcellular location">
    <subcellularLocation>
        <location evidence="2">Secreted</location>
    </subcellularLocation>
</comment>
<comment type="PTM">
    <text evidence="1">The C-terminal propeptide is autocleaved.</text>
</comment>
<comment type="similarity">
    <text evidence="8">Belongs to the peptidase S8 family.</text>
</comment>
<sequence>MATAVSYCLLSCIFALLVVSFASAGKDDQDKQVYIVYMGALPSRVDYMPMSHHTSILQDVTGESSIQDRLVRNYKRSFNGFAARLTESEREILASMDEVVSVFPSKNLNLQTTTSWNFMGLKEGKRTKRNPLIESDTIIGVIDSGIYPESDSFSGKGFGPPPKKWKGVCKGGTNFTCNNKLIGARYYTPKLEGFPESARDNTGHGSHTASIAAGNAVKHVSFYGLGNGTVRGGVPAARIAVYKVCDPGVIRCTSDGILAAFDDAIADKVDIITVSLGADAVGTFEEDTLAIGAFHAMAKGILTVNGAGNNGPERRTIVSMAPWLFTVAASNMNRAFITKVVLGNGKTIVGRSVNSFDLNGKKYPLVYGKSASSRCDASSAGFCSPGCLDSKRVKGKIVLCDTQRNPGEAQAMGAVASIVRNPYEDAASVFSFPVSVLSEDDYNIVLSYVNSTKNPKAAVLKSETIFNQKAPVVASYSSRGPNPLIHDILKPDITAPGSEILAAYSPYVPPSESDTRHVKYTVISGTSMSCPHVAGVAAYIKTFHPLWSPSMIQSAIMTTAWPMNASTSPSNELAEFAYGAGHVDPIAAIHPGLVYEANKSDHITFLCGFNYTGKKLRLISGDSSSCTKEQTKSLTRNLNYPSMSAQVSGTKPFKVTFRRTVTNVGRPNATYKAKVVGSKLKVKVVPAVLSLKSLYEKKSFTVTVSGAGPKAENLVSAQLIWSDGVHFVRSPIVVYA</sequence>
<proteinExistence type="inferred from homology"/>
<reference key="1">
    <citation type="journal article" date="2000" name="Nature">
        <title>Sequence and analysis of chromosome 3 of the plant Arabidopsis thaliana.</title>
        <authorList>
            <person name="Salanoubat M."/>
            <person name="Lemcke K."/>
            <person name="Rieger M."/>
            <person name="Ansorge W."/>
            <person name="Unseld M."/>
            <person name="Fartmann B."/>
            <person name="Valle G."/>
            <person name="Bloecker H."/>
            <person name="Perez-Alonso M."/>
            <person name="Obermaier B."/>
            <person name="Delseny M."/>
            <person name="Boutry M."/>
            <person name="Grivell L.A."/>
            <person name="Mache R."/>
            <person name="Puigdomenech P."/>
            <person name="De Simone V."/>
            <person name="Choisne N."/>
            <person name="Artiguenave F."/>
            <person name="Robert C."/>
            <person name="Brottier P."/>
            <person name="Wincker P."/>
            <person name="Cattolico L."/>
            <person name="Weissenbach J."/>
            <person name="Saurin W."/>
            <person name="Quetier F."/>
            <person name="Schaefer M."/>
            <person name="Mueller-Auer S."/>
            <person name="Gabel C."/>
            <person name="Fuchs M."/>
            <person name="Benes V."/>
            <person name="Wurmbach E."/>
            <person name="Drzonek H."/>
            <person name="Erfle H."/>
            <person name="Jordan N."/>
            <person name="Bangert S."/>
            <person name="Wiedelmann R."/>
            <person name="Kranz H."/>
            <person name="Voss H."/>
            <person name="Holland R."/>
            <person name="Brandt P."/>
            <person name="Nyakatura G."/>
            <person name="Vezzi A."/>
            <person name="D'Angelo M."/>
            <person name="Pallavicini A."/>
            <person name="Toppo S."/>
            <person name="Simionati B."/>
            <person name="Conrad A."/>
            <person name="Hornischer K."/>
            <person name="Kauer G."/>
            <person name="Loehnert T.-H."/>
            <person name="Nordsiek G."/>
            <person name="Reichelt J."/>
            <person name="Scharfe M."/>
            <person name="Schoen O."/>
            <person name="Bargues M."/>
            <person name="Terol J."/>
            <person name="Climent J."/>
            <person name="Navarro P."/>
            <person name="Collado C."/>
            <person name="Perez-Perez A."/>
            <person name="Ottenwaelder B."/>
            <person name="Duchemin D."/>
            <person name="Cooke R."/>
            <person name="Laudie M."/>
            <person name="Berger-Llauro C."/>
            <person name="Purnelle B."/>
            <person name="Masuy D."/>
            <person name="de Haan M."/>
            <person name="Maarse A.C."/>
            <person name="Alcaraz J.-P."/>
            <person name="Cottet A."/>
            <person name="Casacuberta E."/>
            <person name="Monfort A."/>
            <person name="Argiriou A."/>
            <person name="Flores M."/>
            <person name="Liguori R."/>
            <person name="Vitale D."/>
            <person name="Mannhaupt G."/>
            <person name="Haase D."/>
            <person name="Schoof H."/>
            <person name="Rudd S."/>
            <person name="Zaccaria P."/>
            <person name="Mewes H.-W."/>
            <person name="Mayer K.F.X."/>
            <person name="Kaul S."/>
            <person name="Town C.D."/>
            <person name="Koo H.L."/>
            <person name="Tallon L.J."/>
            <person name="Jenkins J."/>
            <person name="Rooney T."/>
            <person name="Rizzo M."/>
            <person name="Walts A."/>
            <person name="Utterback T."/>
            <person name="Fujii C.Y."/>
            <person name="Shea T.P."/>
            <person name="Creasy T.H."/>
            <person name="Haas B."/>
            <person name="Maiti R."/>
            <person name="Wu D."/>
            <person name="Peterson J."/>
            <person name="Van Aken S."/>
            <person name="Pai G."/>
            <person name="Militscher J."/>
            <person name="Sellers P."/>
            <person name="Gill J.E."/>
            <person name="Feldblyum T.V."/>
            <person name="Preuss D."/>
            <person name="Lin X."/>
            <person name="Nierman W.C."/>
            <person name="Salzberg S.L."/>
            <person name="White O."/>
            <person name="Venter J.C."/>
            <person name="Fraser C.M."/>
            <person name="Kaneko T."/>
            <person name="Nakamura Y."/>
            <person name="Sato S."/>
            <person name="Kato T."/>
            <person name="Asamizu E."/>
            <person name="Sasamoto S."/>
            <person name="Kimura T."/>
            <person name="Idesawa K."/>
            <person name="Kawashima K."/>
            <person name="Kishida Y."/>
            <person name="Kiyokawa C."/>
            <person name="Kohara M."/>
            <person name="Matsumoto M."/>
            <person name="Matsuno A."/>
            <person name="Muraki A."/>
            <person name="Nakayama S."/>
            <person name="Nakazaki N."/>
            <person name="Shinpo S."/>
            <person name="Takeuchi C."/>
            <person name="Wada T."/>
            <person name="Watanabe A."/>
            <person name="Yamada M."/>
            <person name="Yasuda M."/>
            <person name="Tabata S."/>
        </authorList>
    </citation>
    <scope>NUCLEOTIDE SEQUENCE [LARGE SCALE GENOMIC DNA]</scope>
    <source>
        <strain>cv. Columbia</strain>
    </source>
</reference>
<reference key="2">
    <citation type="journal article" date="2017" name="Plant J.">
        <title>Araport11: a complete reannotation of the Arabidopsis thaliana reference genome.</title>
        <authorList>
            <person name="Cheng C.Y."/>
            <person name="Krishnakumar V."/>
            <person name="Chan A.P."/>
            <person name="Thibaud-Nissen F."/>
            <person name="Schobel S."/>
            <person name="Town C.D."/>
        </authorList>
    </citation>
    <scope>GENOME REANNOTATION</scope>
    <source>
        <strain>cv. Columbia</strain>
    </source>
</reference>
<reference key="3">
    <citation type="journal article" date="2005" name="PLoS Comput. Biol.">
        <title>Inferring hypotheses on functional relationships of genes: Analysis of the Arabidopsis thaliana subtilase gene family.</title>
        <authorList>
            <person name="Rautengarten C."/>
            <person name="Steinhauser D."/>
            <person name="Bussis D."/>
            <person name="Stintzi A."/>
            <person name="Schaller A."/>
            <person name="Kopka J."/>
            <person name="Altmann T."/>
        </authorList>
    </citation>
    <scope>GENE FAMILY</scope>
    <scope>NOMENCLATURE</scope>
</reference>
<gene>
    <name evidence="7" type="primary">SBT4.6</name>
    <name evidence="9" type="ordered locus">At3g46850</name>
    <name evidence="10" type="ORF">T6H20.120</name>
</gene>
<protein>
    <recommendedName>
        <fullName evidence="7">Subtilisin-like protease SBT4.6</fullName>
        <ecNumber evidence="6">3.4.21.-</ecNumber>
    </recommendedName>
    <alternativeName>
        <fullName evidence="7">Subtilase subfamily 4 member 6</fullName>
        <shortName evidence="7">AtSBT4.6</shortName>
    </alternativeName>
</protein>
<name>SBT46_ARATH</name>
<keyword id="KW-0068">Autocatalytic cleavage</keyword>
<keyword id="KW-0325">Glycoprotein</keyword>
<keyword id="KW-0378">Hydrolase</keyword>
<keyword id="KW-0645">Protease</keyword>
<keyword id="KW-1185">Reference proteome</keyword>
<keyword id="KW-0964">Secreted</keyword>
<keyword id="KW-0720">Serine protease</keyword>
<keyword id="KW-0732">Signal</keyword>
<keyword id="KW-0865">Zymogen</keyword>